<organism>
    <name type="scientific">Rattus norvegicus</name>
    <name type="common">Rat</name>
    <dbReference type="NCBI Taxonomy" id="10116"/>
    <lineage>
        <taxon>Eukaryota</taxon>
        <taxon>Metazoa</taxon>
        <taxon>Chordata</taxon>
        <taxon>Craniata</taxon>
        <taxon>Vertebrata</taxon>
        <taxon>Euteleostomi</taxon>
        <taxon>Mammalia</taxon>
        <taxon>Eutheria</taxon>
        <taxon>Euarchontoglires</taxon>
        <taxon>Glires</taxon>
        <taxon>Rodentia</taxon>
        <taxon>Myomorpha</taxon>
        <taxon>Muroidea</taxon>
        <taxon>Muridae</taxon>
        <taxon>Murinae</taxon>
        <taxon>Rattus</taxon>
    </lineage>
</organism>
<keyword id="KW-0007">Acetylation</keyword>
<keyword id="KW-0164">Citrullination</keyword>
<keyword id="KW-0175">Coiled coil</keyword>
<keyword id="KW-1017">Isopeptide bond</keyword>
<keyword id="KW-0597">Phosphoprotein</keyword>
<keyword id="KW-1185">Reference proteome</keyword>
<keyword id="KW-0832">Ubl conjugation</keyword>
<reference key="1">
    <citation type="journal article" date="2004" name="Genome Res.">
        <title>The status, quality, and expansion of the NIH full-length cDNA project: the Mammalian Gene Collection (MGC).</title>
        <authorList>
            <consortium name="The MGC Project Team"/>
        </authorList>
    </citation>
    <scope>NUCLEOTIDE SEQUENCE [LARGE SCALE MRNA]</scope>
    <source>
        <tissue>Ovary</tissue>
    </source>
</reference>
<reference key="2">
    <citation type="journal article" date="2012" name="Nat. Commun.">
        <title>Quantitative maps of protein phosphorylation sites across 14 different rat organs and tissues.</title>
        <authorList>
            <person name="Lundby A."/>
            <person name="Secher A."/>
            <person name="Lage K."/>
            <person name="Nordsborg N.B."/>
            <person name="Dmytriyev A."/>
            <person name="Lundby C."/>
            <person name="Olsen J.V."/>
        </authorList>
    </citation>
    <scope>PHOSPHORYLATION [LARGE SCALE ANALYSIS] AT SER-265</scope>
    <scope>IDENTIFICATION BY MASS SPECTROMETRY [LARGE SCALE ANALYSIS]</scope>
</reference>
<comment type="PTM">
    <text evidence="1">Citrullinated by PADI4.</text>
</comment>
<comment type="similarity">
    <text evidence="5">Belongs to the RRP15 family.</text>
</comment>
<protein>
    <recommendedName>
        <fullName>RRP15-like protein</fullName>
    </recommendedName>
    <alternativeName>
        <fullName>Ribosomal RNA-processing protein 15</fullName>
    </alternativeName>
</protein>
<gene>
    <name type="primary">Rrp15</name>
</gene>
<proteinExistence type="evidence at protein level"/>
<accession>Q5M947</accession>
<sequence length="280" mass="30926">MAAAVQDSRVNPGGKLKRSPKKKKKMKKVAKAAVSKLEDELKDSSGGEGSCESEMDDSDDGAAEADSEDNVESCEEENEVAAESSAGTNSGWADAMAKILNKKTPKSKPTILTKNKELEKEKEKLKQERLEKRKQIDKKREWEMLCRVKPDVIKDKEAERNLQRIATRGVVQLFNAVQKHQRNVDEKVKEVGGSIRKRAKLMSTVSKKDFISVLRGMDGASENSSAGKSPKARQTEVKSEEGPGWKILRDDFMMGASMKDWDKESEGEEPADGQAGSASH</sequence>
<dbReference type="EMBL" id="BC087649">
    <property type="protein sequence ID" value="AAH87649.1"/>
    <property type="molecule type" value="mRNA"/>
</dbReference>
<dbReference type="RefSeq" id="NP_001009702.1">
    <property type="nucleotide sequence ID" value="NM_001009702.1"/>
</dbReference>
<dbReference type="SMR" id="Q5M947"/>
<dbReference type="FunCoup" id="Q5M947">
    <property type="interactions" value="2263"/>
</dbReference>
<dbReference type="STRING" id="10116.ENSRNOP00000003359"/>
<dbReference type="iPTMnet" id="Q5M947"/>
<dbReference type="PhosphoSitePlus" id="Q5M947"/>
<dbReference type="PaxDb" id="10116-ENSRNOP00000003359"/>
<dbReference type="Ensembl" id="ENSRNOT00000003359.7">
    <property type="protein sequence ID" value="ENSRNOP00000003359.4"/>
    <property type="gene ID" value="ENSRNOG00000002450.8"/>
</dbReference>
<dbReference type="GeneID" id="360895"/>
<dbReference type="KEGG" id="rno:360895"/>
<dbReference type="UCSC" id="RGD:1306106">
    <property type="organism name" value="rat"/>
</dbReference>
<dbReference type="AGR" id="RGD:1306106"/>
<dbReference type="CTD" id="51018"/>
<dbReference type="RGD" id="1306106">
    <property type="gene designation" value="Rrp15"/>
</dbReference>
<dbReference type="eggNOG" id="KOG2974">
    <property type="taxonomic scope" value="Eukaryota"/>
</dbReference>
<dbReference type="GeneTree" id="ENSGT00390000001960"/>
<dbReference type="HOGENOM" id="CLU_079732_0_0_1"/>
<dbReference type="InParanoid" id="Q5M947"/>
<dbReference type="OMA" id="FVKQRFY"/>
<dbReference type="OrthoDB" id="20949at2759"/>
<dbReference type="PhylomeDB" id="Q5M947"/>
<dbReference type="TreeFam" id="TF106119"/>
<dbReference type="PRO" id="PR:Q5M947"/>
<dbReference type="Proteomes" id="UP000002494">
    <property type="component" value="Chromosome 13"/>
</dbReference>
<dbReference type="Bgee" id="ENSRNOG00000002450">
    <property type="expression patterns" value="Expressed in skeletal muscle tissue and 20 other cell types or tissues"/>
</dbReference>
<dbReference type="GO" id="GO:0030687">
    <property type="term" value="C:preribosome, large subunit precursor"/>
    <property type="evidence" value="ECO:0000318"/>
    <property type="project" value="GO_Central"/>
</dbReference>
<dbReference type="GO" id="GO:0000460">
    <property type="term" value="P:maturation of 5.8S rRNA"/>
    <property type="evidence" value="ECO:0000318"/>
    <property type="project" value="GO_Central"/>
</dbReference>
<dbReference type="GO" id="GO:0000470">
    <property type="term" value="P:maturation of LSU-rRNA"/>
    <property type="evidence" value="ECO:0000318"/>
    <property type="project" value="GO_Central"/>
</dbReference>
<dbReference type="InterPro" id="IPR012459">
    <property type="entry name" value="Rrp15"/>
</dbReference>
<dbReference type="PANTHER" id="PTHR13245">
    <property type="entry name" value="RRP15-LIKE PROTEIN"/>
    <property type="match status" value="1"/>
</dbReference>
<dbReference type="PANTHER" id="PTHR13245:SF14">
    <property type="entry name" value="RRP15-LIKE PROTEIN"/>
    <property type="match status" value="1"/>
</dbReference>
<dbReference type="Pfam" id="PF07890">
    <property type="entry name" value="Rrp15p"/>
    <property type="match status" value="1"/>
</dbReference>
<name>RRP15_RAT</name>
<evidence type="ECO:0000250" key="1"/>
<evidence type="ECO:0000250" key="2">
    <source>
        <dbReference type="UniProtKB" id="Q9Y3B9"/>
    </source>
</evidence>
<evidence type="ECO:0000255" key="3"/>
<evidence type="ECO:0000256" key="4">
    <source>
        <dbReference type="SAM" id="MobiDB-lite"/>
    </source>
</evidence>
<evidence type="ECO:0000305" key="5"/>
<evidence type="ECO:0007744" key="6">
    <source>
    </source>
</evidence>
<feature type="initiator methionine" description="Removed" evidence="2">
    <location>
        <position position="1"/>
    </location>
</feature>
<feature type="chain" id="PRO_0000273215" description="RRP15-like protein">
    <location>
        <begin position="2"/>
        <end position="280"/>
    </location>
</feature>
<feature type="region of interest" description="Disordered" evidence="4">
    <location>
        <begin position="1"/>
        <end position="122"/>
    </location>
</feature>
<feature type="region of interest" description="Disordered" evidence="4">
    <location>
        <begin position="217"/>
        <end position="280"/>
    </location>
</feature>
<feature type="coiled-coil region" evidence="3">
    <location>
        <begin position="21"/>
        <end position="45"/>
    </location>
</feature>
<feature type="coiled-coil region" evidence="3">
    <location>
        <begin position="107"/>
        <end position="143"/>
    </location>
</feature>
<feature type="compositionally biased region" description="Basic residues" evidence="4">
    <location>
        <begin position="15"/>
        <end position="30"/>
    </location>
</feature>
<feature type="compositionally biased region" description="Basic and acidic residues" evidence="4">
    <location>
        <begin position="36"/>
        <end position="45"/>
    </location>
</feature>
<feature type="compositionally biased region" description="Acidic residues" evidence="4">
    <location>
        <begin position="51"/>
        <end position="80"/>
    </location>
</feature>
<feature type="compositionally biased region" description="Basic and acidic residues" evidence="4">
    <location>
        <begin position="233"/>
        <end position="252"/>
    </location>
</feature>
<feature type="modified residue" description="N-acetylalanine" evidence="2">
    <location>
        <position position="2"/>
    </location>
</feature>
<feature type="modified residue" description="Citrulline" evidence="1">
    <location>
        <position position="9"/>
    </location>
</feature>
<feature type="modified residue" description="Phosphoserine" evidence="2">
    <location>
        <position position="58"/>
    </location>
</feature>
<feature type="modified residue" description="Phosphoserine" evidence="2">
    <location>
        <position position="67"/>
    </location>
</feature>
<feature type="modified residue" description="Phosphothreonine" evidence="2">
    <location>
        <position position="104"/>
    </location>
</feature>
<feature type="modified residue" description="Phosphoserine" evidence="2">
    <location>
        <position position="206"/>
    </location>
</feature>
<feature type="modified residue" description="Phosphoserine" evidence="6">
    <location>
        <position position="265"/>
    </location>
</feature>
<feature type="modified residue" description="Phosphoserine" evidence="2">
    <location>
        <position position="279"/>
    </location>
</feature>
<feature type="cross-link" description="Glycyl lysine isopeptide (Lys-Gly) (interchain with G-Cter in SUMO2)" evidence="2">
    <location>
        <position position="108"/>
    </location>
</feature>
<feature type="cross-link" description="Glycyl lysine isopeptide (Lys-Gly) (interchain with G-Cter in SUMO2)" evidence="2">
    <location>
        <position position="179"/>
    </location>
</feature>
<feature type="cross-link" description="Glycyl lysine isopeptide (Lys-Gly) (interchain with G-Cter in SUMO2)" evidence="2">
    <location>
        <position position="208"/>
    </location>
</feature>
<feature type="cross-link" description="Glycyl lysine isopeptide (Lys-Gly) (interchain with G-Cter in SUMO1); alternate" evidence="2">
    <location>
        <position position="238"/>
    </location>
</feature>
<feature type="cross-link" description="Glycyl lysine isopeptide (Lys-Gly) (interchain with G-Cter in SUMO2); alternate" evidence="2">
    <location>
        <position position="238"/>
    </location>
</feature>